<name>LEU1_SACS2</name>
<gene>
    <name type="primary">leuA</name>
    <name type="ordered locus">SSO2407</name>
</gene>
<feature type="chain" id="PRO_0000140424" description="2-isopropylmalate synthase">
    <location>
        <begin position="1"/>
        <end position="386"/>
    </location>
</feature>
<feature type="domain" description="Pyruvate carboxyltransferase" evidence="4">
    <location>
        <begin position="15"/>
        <end position="269"/>
    </location>
</feature>
<feature type="binding site" evidence="3">
    <location>
        <position position="24"/>
    </location>
    <ligand>
        <name>a divalent metal cation</name>
        <dbReference type="ChEBI" id="CHEBI:60240"/>
    </ligand>
</feature>
<feature type="binding site" evidence="3">
    <location>
        <position position="207"/>
    </location>
    <ligand>
        <name>a divalent metal cation</name>
        <dbReference type="ChEBI" id="CHEBI:60240"/>
    </ligand>
</feature>
<feature type="binding site" evidence="3">
    <location>
        <position position="209"/>
    </location>
    <ligand>
        <name>a divalent metal cation</name>
        <dbReference type="ChEBI" id="CHEBI:60240"/>
    </ligand>
</feature>
<feature type="binding site" evidence="3">
    <location>
        <position position="243"/>
    </location>
    <ligand>
        <name>a divalent metal cation</name>
        <dbReference type="ChEBI" id="CHEBI:60240"/>
    </ligand>
</feature>
<proteinExistence type="inferred from homology"/>
<organism>
    <name type="scientific">Saccharolobus solfataricus (strain ATCC 35092 / DSM 1617 / JCM 11322 / P2)</name>
    <name type="common">Sulfolobus solfataricus</name>
    <dbReference type="NCBI Taxonomy" id="273057"/>
    <lineage>
        <taxon>Archaea</taxon>
        <taxon>Thermoproteota</taxon>
        <taxon>Thermoprotei</taxon>
        <taxon>Sulfolobales</taxon>
        <taxon>Sulfolobaceae</taxon>
        <taxon>Saccharolobus</taxon>
    </lineage>
</organism>
<evidence type="ECO:0000250" key="1">
    <source>
        <dbReference type="UniProtKB" id="P9WQB3"/>
    </source>
</evidence>
<evidence type="ECO:0000250" key="2">
    <source>
        <dbReference type="UniProtKB" id="Q4JA78"/>
    </source>
</evidence>
<evidence type="ECO:0000250" key="3">
    <source>
        <dbReference type="UniProtKB" id="Q9JZG1"/>
    </source>
</evidence>
<evidence type="ECO:0000255" key="4">
    <source>
        <dbReference type="PROSITE-ProRule" id="PRU01151"/>
    </source>
</evidence>
<evidence type="ECO:0000305" key="5"/>
<comment type="function">
    <text evidence="2">Catalyzes the condensation of the acetyl group of acetyl-CoA with 3-methyl-2-oxobutanoate (2-oxoisovalerate) to form 3-carboxy-3-hydroxy-4-methylpentanoate (2-isopropylmalate). Carries out the first step of the leucine biosynthesis pathway.</text>
</comment>
<comment type="catalytic activity">
    <reaction evidence="2">
        <text>3-methyl-2-oxobutanoate + acetyl-CoA + H2O = (2S)-2-isopropylmalate + CoA + H(+)</text>
        <dbReference type="Rhea" id="RHEA:21524"/>
        <dbReference type="ChEBI" id="CHEBI:1178"/>
        <dbReference type="ChEBI" id="CHEBI:11851"/>
        <dbReference type="ChEBI" id="CHEBI:15377"/>
        <dbReference type="ChEBI" id="CHEBI:15378"/>
        <dbReference type="ChEBI" id="CHEBI:57287"/>
        <dbReference type="ChEBI" id="CHEBI:57288"/>
        <dbReference type="EC" id="2.3.3.13"/>
    </reaction>
    <physiologicalReaction direction="left-to-right" evidence="2">
        <dbReference type="Rhea" id="RHEA:21525"/>
    </physiologicalReaction>
</comment>
<comment type="cofactor">
    <cofactor evidence="3">
        <name>a divalent metal cation</name>
        <dbReference type="ChEBI" id="CHEBI:60240"/>
    </cofactor>
</comment>
<comment type="pathway">
    <text evidence="2">Amino-acid biosynthesis; L-leucine biosynthesis; L-leucine from 3-methyl-2-oxobutanoate: step 1/4.</text>
</comment>
<comment type="subunit">
    <text evidence="1">Homodimer.</text>
</comment>
<comment type="similarity">
    <text evidence="5">Belongs to the alpha-IPM synthase/homocitrate synthase family.</text>
</comment>
<comment type="sequence caution" evidence="5">
    <conflict type="frameshift">
        <sequence resource="EMBL-CDS" id="AAK42554"/>
    </conflict>
</comment>
<keyword id="KW-0028">Amino-acid biosynthesis</keyword>
<keyword id="KW-0100">Branched-chain amino acid biosynthesis</keyword>
<keyword id="KW-0432">Leucine biosynthesis</keyword>
<keyword id="KW-0479">Metal-binding</keyword>
<keyword id="KW-1185">Reference proteome</keyword>
<keyword id="KW-0808">Transferase</keyword>
<dbReference type="EC" id="2.3.3.13" evidence="2"/>
<dbReference type="EMBL" id="AE006641">
    <property type="protein sequence ID" value="AAK42554.1"/>
    <property type="status" value="ALT_FRAME"/>
    <property type="molecule type" value="Genomic_DNA"/>
</dbReference>
<dbReference type="PIR" id="C90412">
    <property type="entry name" value="C90412"/>
</dbReference>
<dbReference type="SMR" id="Q97W36"/>
<dbReference type="FunCoup" id="Q97W36">
    <property type="interactions" value="265"/>
</dbReference>
<dbReference type="STRING" id="273057.SSO2407"/>
<dbReference type="PaxDb" id="273057-SSO2407"/>
<dbReference type="EnsemblBacteria" id="AAK42554">
    <property type="protein sequence ID" value="AAK42554"/>
    <property type="gene ID" value="SSO2407"/>
</dbReference>
<dbReference type="KEGG" id="sso:SSO2407"/>
<dbReference type="PATRIC" id="fig|273057.12.peg.2489"/>
<dbReference type="eggNOG" id="arCOG02092">
    <property type="taxonomic scope" value="Archaea"/>
</dbReference>
<dbReference type="HOGENOM" id="CLU_022158_4_2_2"/>
<dbReference type="InParanoid" id="Q97W36"/>
<dbReference type="PhylomeDB" id="Q97W36"/>
<dbReference type="UniPathway" id="UPA00048">
    <property type="reaction ID" value="UER00070"/>
</dbReference>
<dbReference type="Proteomes" id="UP000001974">
    <property type="component" value="Chromosome"/>
</dbReference>
<dbReference type="GO" id="GO:0003852">
    <property type="term" value="F:2-isopropylmalate synthase activity"/>
    <property type="evidence" value="ECO:0000318"/>
    <property type="project" value="GO_Central"/>
</dbReference>
<dbReference type="GO" id="GO:0046872">
    <property type="term" value="F:metal ion binding"/>
    <property type="evidence" value="ECO:0007669"/>
    <property type="project" value="UniProtKB-KW"/>
</dbReference>
<dbReference type="GO" id="GO:0009098">
    <property type="term" value="P:L-leucine biosynthetic process"/>
    <property type="evidence" value="ECO:0000318"/>
    <property type="project" value="GO_Central"/>
</dbReference>
<dbReference type="CDD" id="cd07940">
    <property type="entry name" value="DRE_TIM_IPMS"/>
    <property type="match status" value="1"/>
</dbReference>
<dbReference type="FunFam" id="1.10.238.260:FF:000001">
    <property type="entry name" value="2-isopropylmalate synthase"/>
    <property type="match status" value="1"/>
</dbReference>
<dbReference type="FunFam" id="3.20.20.70:FF:000010">
    <property type="entry name" value="2-isopropylmalate synthase"/>
    <property type="match status" value="1"/>
</dbReference>
<dbReference type="Gene3D" id="1.10.238.260">
    <property type="match status" value="1"/>
</dbReference>
<dbReference type="Gene3D" id="3.20.20.70">
    <property type="entry name" value="Aldolase class I"/>
    <property type="match status" value="1"/>
</dbReference>
<dbReference type="InterPro" id="IPR050073">
    <property type="entry name" value="2-IPM_HCS-like"/>
</dbReference>
<dbReference type="InterPro" id="IPR002034">
    <property type="entry name" value="AIPM/Hcit_synth_CS"/>
</dbReference>
<dbReference type="InterPro" id="IPR013785">
    <property type="entry name" value="Aldolase_TIM"/>
</dbReference>
<dbReference type="InterPro" id="IPR054948">
    <property type="entry name" value="IPMS"/>
</dbReference>
<dbReference type="InterPro" id="IPR011830">
    <property type="entry name" value="LEU1_arch"/>
</dbReference>
<dbReference type="InterPro" id="IPR054691">
    <property type="entry name" value="LeuA/HCS_post-cat"/>
</dbReference>
<dbReference type="InterPro" id="IPR000891">
    <property type="entry name" value="PYR_CT"/>
</dbReference>
<dbReference type="NCBIfam" id="NF041069">
    <property type="entry name" value="IPMS_Sufob"/>
    <property type="match status" value="1"/>
</dbReference>
<dbReference type="NCBIfam" id="TIGR02090">
    <property type="entry name" value="LEU1_arch"/>
    <property type="match status" value="1"/>
</dbReference>
<dbReference type="PANTHER" id="PTHR10277:SF9">
    <property type="entry name" value="2-ISOPROPYLMALATE SYNTHASE 1, CHLOROPLASTIC-RELATED"/>
    <property type="match status" value="1"/>
</dbReference>
<dbReference type="PANTHER" id="PTHR10277">
    <property type="entry name" value="HOMOCITRATE SYNTHASE-RELATED"/>
    <property type="match status" value="1"/>
</dbReference>
<dbReference type="Pfam" id="PF22617">
    <property type="entry name" value="HCS_D2"/>
    <property type="match status" value="1"/>
</dbReference>
<dbReference type="Pfam" id="PF00682">
    <property type="entry name" value="HMGL-like"/>
    <property type="match status" value="1"/>
</dbReference>
<dbReference type="SUPFAM" id="SSF51569">
    <property type="entry name" value="Aldolase"/>
    <property type="match status" value="1"/>
</dbReference>
<dbReference type="PROSITE" id="PS00815">
    <property type="entry name" value="AIPM_HOMOCIT_SYNTH_1"/>
    <property type="match status" value="1"/>
</dbReference>
<dbReference type="PROSITE" id="PS00816">
    <property type="entry name" value="AIPM_HOMOCIT_SYNTH_2"/>
    <property type="match status" value="1"/>
</dbReference>
<dbReference type="PROSITE" id="PS50991">
    <property type="entry name" value="PYR_CT"/>
    <property type="match status" value="1"/>
</dbReference>
<protein>
    <recommendedName>
        <fullName>2-isopropylmalate synthase</fullName>
        <shortName>IPMS</shortName>
        <ecNumber evidence="2">2.3.3.13</ecNumber>
    </recommendedName>
    <alternativeName>
        <fullName>Alpha-isopropylmalate synthase</fullName>
        <shortName>Alpha-IPM synthase</shortName>
    </alternativeName>
</protein>
<accession>Q97W36</accession>
<reference key="1">
    <citation type="journal article" date="2001" name="Proc. Natl. Acad. Sci. U.S.A.">
        <title>The complete genome of the crenarchaeon Sulfolobus solfataricus P2.</title>
        <authorList>
            <person name="She Q."/>
            <person name="Singh R.K."/>
            <person name="Confalonieri F."/>
            <person name="Zivanovic Y."/>
            <person name="Allard G."/>
            <person name="Awayez M.J."/>
            <person name="Chan-Weiher C.C.-Y."/>
            <person name="Clausen I.G."/>
            <person name="Curtis B.A."/>
            <person name="De Moors A."/>
            <person name="Erauso G."/>
            <person name="Fletcher C."/>
            <person name="Gordon P.M.K."/>
            <person name="Heikamp-de Jong I."/>
            <person name="Jeffries A.C."/>
            <person name="Kozera C.J."/>
            <person name="Medina N."/>
            <person name="Peng X."/>
            <person name="Thi-Ngoc H.P."/>
            <person name="Redder P."/>
            <person name="Schenk M.E."/>
            <person name="Theriault C."/>
            <person name="Tolstrup N."/>
            <person name="Charlebois R.L."/>
            <person name="Doolittle W.F."/>
            <person name="Duguet M."/>
            <person name="Gaasterland T."/>
            <person name="Garrett R.A."/>
            <person name="Ragan M.A."/>
            <person name="Sensen C.W."/>
            <person name="Van der Oost J."/>
        </authorList>
    </citation>
    <scope>NUCLEOTIDE SEQUENCE [LARGE SCALE GENOMIC DNA]</scope>
    <source>
        <strain>ATCC 35092 / DSM 1617 / JCM 11322 / P2</strain>
    </source>
</reference>
<sequence>MVRTRYEYSLRSKKIRIFDTTLRDGEQAPGIDLTTEQKIMIARKLADLGVDVIEAGFPASSEGEFIATRKIFEEIGDQVEVIGLSRSNKNDIDKTISTGISSIHLFIATSELHMKYKLKMTKEEVLNKIYESVKYAKDHGMIVEFSPEDATRTEEDFLFTAIRTAIEAGADRINIPDTVGTMHPFKYYDMIKKIVNFVGERIIVSVHCHNDFGLATANSLAGVYAGARQAHVTVNGIGERAGNASLEEVVMGIKKLLNYETNVKTWKLYEVSRFVAEMTGVPVPYFKAIVGDNAFGHESGIHVHGVIENPFTYEPISPEEVGNFRRLALGKHSGIHGLRKLLEEQGIYLSDDKLKIVLAEIKKLAESGNKVTVEDAKNIALKLMNS</sequence>